<gene>
    <name evidence="1" type="primary">pqqB</name>
</gene>
<organism>
    <name type="scientific">Stutzerimonas stutzeri</name>
    <name type="common">Pseudomonas stutzeri</name>
    <dbReference type="NCBI Taxonomy" id="316"/>
    <lineage>
        <taxon>Bacteria</taxon>
        <taxon>Pseudomonadati</taxon>
        <taxon>Pseudomonadota</taxon>
        <taxon>Gammaproteobacteria</taxon>
        <taxon>Pseudomonadales</taxon>
        <taxon>Pseudomonadaceae</taxon>
        <taxon>Stutzerimonas</taxon>
    </lineage>
</organism>
<name>PQQB_STUST</name>
<comment type="function">
    <text evidence="1">May be involved in the transport of PQQ or its precursor to the periplasm.</text>
</comment>
<comment type="pathway">
    <text evidence="1">Cofactor biosynthesis; pyrroloquinoline quinone biosynthesis.</text>
</comment>
<comment type="similarity">
    <text evidence="1">Belongs to the PqqB family.</text>
</comment>
<dbReference type="EMBL" id="AF176640">
    <property type="protein sequence ID" value="AAG09251.1"/>
    <property type="molecule type" value="Genomic_DNA"/>
</dbReference>
<dbReference type="SMR" id="Q9F9U0"/>
<dbReference type="UniPathway" id="UPA00539"/>
<dbReference type="GO" id="GO:0018189">
    <property type="term" value="P:pyrroloquinoline quinone biosynthetic process"/>
    <property type="evidence" value="ECO:0007669"/>
    <property type="project" value="UniProtKB-UniRule"/>
</dbReference>
<dbReference type="CDD" id="cd16274">
    <property type="entry name" value="PQQB-like_MBL-fold"/>
    <property type="match status" value="1"/>
</dbReference>
<dbReference type="Gene3D" id="3.60.15.10">
    <property type="entry name" value="Ribonuclease Z/Hydroxyacylglutathione hydrolase-like"/>
    <property type="match status" value="1"/>
</dbReference>
<dbReference type="HAMAP" id="MF_00653">
    <property type="entry name" value="PQQ_syn_PqqB"/>
    <property type="match status" value="1"/>
</dbReference>
<dbReference type="InterPro" id="IPR001279">
    <property type="entry name" value="Metallo-B-lactamas"/>
</dbReference>
<dbReference type="InterPro" id="IPR011842">
    <property type="entry name" value="PQQ_synth_PqqB"/>
</dbReference>
<dbReference type="InterPro" id="IPR036866">
    <property type="entry name" value="RibonucZ/Hydroxyglut_hydro"/>
</dbReference>
<dbReference type="NCBIfam" id="TIGR02108">
    <property type="entry name" value="PQQ_syn_pqqB"/>
    <property type="match status" value="1"/>
</dbReference>
<dbReference type="PANTHER" id="PTHR42663:SF7">
    <property type="entry name" value="COENZYME PQQ SYNTHESIS PROTEIN B"/>
    <property type="match status" value="1"/>
</dbReference>
<dbReference type="PANTHER" id="PTHR42663">
    <property type="entry name" value="HYDROLASE C777.06C-RELATED-RELATED"/>
    <property type="match status" value="1"/>
</dbReference>
<dbReference type="Pfam" id="PF12706">
    <property type="entry name" value="Lactamase_B_2"/>
    <property type="match status" value="1"/>
</dbReference>
<dbReference type="SUPFAM" id="SSF56281">
    <property type="entry name" value="Metallo-hydrolase/oxidoreductase"/>
    <property type="match status" value="1"/>
</dbReference>
<accession>Q9F9U0</accession>
<reference key="1">
    <citation type="submission" date="1999-08" db="EMBL/GenBank/DDBJ databases">
        <title>Identification and characterization of genes activated by 2-chloroethanol in Pseudomonas stutzeri BC-2.</title>
        <authorList>
            <person name="Chang C.-H."/>
            <person name="Herrick J.B."/>
            <person name="Okinaka R.T."/>
            <person name="Brainard J.B."/>
            <person name="Terwilliger T.C."/>
        </authorList>
    </citation>
    <scope>NUCLEOTIDE SEQUENCE [GENOMIC DNA]</scope>
    <source>
        <strain>BC-2</strain>
    </source>
</reference>
<feature type="chain" id="PRO_0000220007" description="Coenzyme PQQ synthesis protein B">
    <location>
        <begin position="1"/>
        <end position="304"/>
    </location>
</feature>
<protein>
    <recommendedName>
        <fullName evidence="1">Coenzyme PQQ synthesis protein B</fullName>
    </recommendedName>
    <alternativeName>
        <fullName evidence="1">Pyrroloquinoline quinone biosynthesis protein B</fullName>
    </alternativeName>
</protein>
<evidence type="ECO:0000255" key="1">
    <source>
        <dbReference type="HAMAP-Rule" id="MF_00653"/>
    </source>
</evidence>
<proteinExistence type="inferred from homology"/>
<sequence>MHIRILGSAAGGGFPQWNCNCRNCRGVRAGTLRAQPRTQSSIALSDDGGEWVLCNASPDIRAQLEAFPALQPARQLRDTAIAGIVLLDSQIDHCTGLLTLREGCPHQVWCTEMVHQDLTSGFPLFNMLSHWNGGLQHQLIELDAKPFTIPACPGLSITAIALRSSAPPYSPHRGNPHPGDNIGLFIEDRRSGRSLFYAPGLGQVEEHLLSWMRRADCLLVDGTLWRDDEMQLCEVGDKLGSEMGHLCQSGPGGMIEVLDGLPSVRKILIHINNTNPILDLDSPERAELDARGIEVAFDGMSIHL</sequence>
<keyword id="KW-0884">PQQ biosynthesis</keyword>
<keyword id="KW-0813">Transport</keyword>